<gene>
    <name evidence="1" type="primary">hemH</name>
    <name type="ordered locus">ECIAI39_0196</name>
</gene>
<keyword id="KW-0963">Cytoplasm</keyword>
<keyword id="KW-0350">Heme biosynthesis</keyword>
<keyword id="KW-0408">Iron</keyword>
<keyword id="KW-0456">Lyase</keyword>
<keyword id="KW-0479">Metal-binding</keyword>
<keyword id="KW-0627">Porphyrin biosynthesis</keyword>
<feature type="chain" id="PRO_1000119607" description="Ferrochelatase">
    <location>
        <begin position="1"/>
        <end position="320"/>
    </location>
</feature>
<feature type="binding site" evidence="1">
    <location>
        <position position="194"/>
    </location>
    <ligand>
        <name>Fe cation</name>
        <dbReference type="ChEBI" id="CHEBI:24875"/>
    </ligand>
</feature>
<feature type="binding site" evidence="1">
    <location>
        <position position="275"/>
    </location>
    <ligand>
        <name>Fe cation</name>
        <dbReference type="ChEBI" id="CHEBI:24875"/>
    </ligand>
</feature>
<dbReference type="EC" id="4.98.1.1" evidence="1"/>
<dbReference type="EMBL" id="CU928164">
    <property type="protein sequence ID" value="CAR16336.1"/>
    <property type="molecule type" value="Genomic_DNA"/>
</dbReference>
<dbReference type="RefSeq" id="WP_001250105.1">
    <property type="nucleotide sequence ID" value="NC_011750.1"/>
</dbReference>
<dbReference type="RefSeq" id="YP_002406242.1">
    <property type="nucleotide sequence ID" value="NC_011750.1"/>
</dbReference>
<dbReference type="SMR" id="B7NIF5"/>
<dbReference type="STRING" id="585057.ECIAI39_0196"/>
<dbReference type="GeneID" id="75170493"/>
<dbReference type="KEGG" id="ect:ECIAI39_0196"/>
<dbReference type="PATRIC" id="fig|585057.6.peg.209"/>
<dbReference type="HOGENOM" id="CLU_018884_0_0_6"/>
<dbReference type="UniPathway" id="UPA00252">
    <property type="reaction ID" value="UER00325"/>
</dbReference>
<dbReference type="Proteomes" id="UP000000749">
    <property type="component" value="Chromosome"/>
</dbReference>
<dbReference type="GO" id="GO:0005737">
    <property type="term" value="C:cytoplasm"/>
    <property type="evidence" value="ECO:0007669"/>
    <property type="project" value="UniProtKB-SubCell"/>
</dbReference>
<dbReference type="GO" id="GO:0004325">
    <property type="term" value="F:ferrochelatase activity"/>
    <property type="evidence" value="ECO:0007669"/>
    <property type="project" value="UniProtKB-UniRule"/>
</dbReference>
<dbReference type="GO" id="GO:0046872">
    <property type="term" value="F:metal ion binding"/>
    <property type="evidence" value="ECO:0007669"/>
    <property type="project" value="UniProtKB-KW"/>
</dbReference>
<dbReference type="GO" id="GO:0006783">
    <property type="term" value="P:heme biosynthetic process"/>
    <property type="evidence" value="ECO:0007669"/>
    <property type="project" value="UniProtKB-UniRule"/>
</dbReference>
<dbReference type="CDD" id="cd00419">
    <property type="entry name" value="Ferrochelatase_C"/>
    <property type="match status" value="1"/>
</dbReference>
<dbReference type="CDD" id="cd03411">
    <property type="entry name" value="Ferrochelatase_N"/>
    <property type="match status" value="1"/>
</dbReference>
<dbReference type="FunFam" id="3.40.50.1400:FF:000004">
    <property type="entry name" value="Ferrochelatase"/>
    <property type="match status" value="1"/>
</dbReference>
<dbReference type="Gene3D" id="3.40.50.1400">
    <property type="match status" value="2"/>
</dbReference>
<dbReference type="HAMAP" id="MF_00323">
    <property type="entry name" value="Ferrochelatase"/>
    <property type="match status" value="1"/>
</dbReference>
<dbReference type="InterPro" id="IPR001015">
    <property type="entry name" value="Ferrochelatase"/>
</dbReference>
<dbReference type="InterPro" id="IPR019772">
    <property type="entry name" value="Ferrochelatase_AS"/>
</dbReference>
<dbReference type="InterPro" id="IPR033644">
    <property type="entry name" value="Ferrochelatase_C"/>
</dbReference>
<dbReference type="InterPro" id="IPR033659">
    <property type="entry name" value="Ferrochelatase_N"/>
</dbReference>
<dbReference type="NCBIfam" id="TIGR00109">
    <property type="entry name" value="hemH"/>
    <property type="match status" value="1"/>
</dbReference>
<dbReference type="PANTHER" id="PTHR11108">
    <property type="entry name" value="FERROCHELATASE"/>
    <property type="match status" value="1"/>
</dbReference>
<dbReference type="PANTHER" id="PTHR11108:SF1">
    <property type="entry name" value="FERROCHELATASE, MITOCHONDRIAL"/>
    <property type="match status" value="1"/>
</dbReference>
<dbReference type="Pfam" id="PF00762">
    <property type="entry name" value="Ferrochelatase"/>
    <property type="match status" value="1"/>
</dbReference>
<dbReference type="SUPFAM" id="SSF53800">
    <property type="entry name" value="Chelatase"/>
    <property type="match status" value="1"/>
</dbReference>
<dbReference type="PROSITE" id="PS00534">
    <property type="entry name" value="FERROCHELATASE"/>
    <property type="match status" value="1"/>
</dbReference>
<evidence type="ECO:0000255" key="1">
    <source>
        <dbReference type="HAMAP-Rule" id="MF_00323"/>
    </source>
</evidence>
<sequence length="320" mass="35854">MRQTKTGILLANLGTPDAPTPEAVKRYLKQFLSDRRVVDTSRLLWWPLLRGVILPLRSPRVAKLYASVWMEGGSPLMVYSRQQQQALAQRLPETPVALGMSYGSPSLESAVDELLAEHVDHIVVLPLYPQFSCSTVGAVWDELARILARKRSIPGISFIRDYADNHDYINALANSVRASFAKHGEPDLLLLSYHGIPQRYADEGDDYPQRCRTTTRELASALGMAPEKVMMTFQSRFGREPWLMPYTDETLKMLGEKGVGHIQVMCPGFAADCLETLEEIAEQNREVFLGAGGKKYEYIPALNATPEHIEMMANLVAAYR</sequence>
<protein>
    <recommendedName>
        <fullName evidence="1">Ferrochelatase</fullName>
        <ecNumber evidence="1">4.98.1.1</ecNumber>
    </recommendedName>
    <alternativeName>
        <fullName evidence="1">Heme synthase</fullName>
    </alternativeName>
    <alternativeName>
        <fullName evidence="1">Protoheme ferro-lyase</fullName>
    </alternativeName>
</protein>
<organism>
    <name type="scientific">Escherichia coli O7:K1 (strain IAI39 / ExPEC)</name>
    <dbReference type="NCBI Taxonomy" id="585057"/>
    <lineage>
        <taxon>Bacteria</taxon>
        <taxon>Pseudomonadati</taxon>
        <taxon>Pseudomonadota</taxon>
        <taxon>Gammaproteobacteria</taxon>
        <taxon>Enterobacterales</taxon>
        <taxon>Enterobacteriaceae</taxon>
        <taxon>Escherichia</taxon>
    </lineage>
</organism>
<accession>B7NIF5</accession>
<comment type="function">
    <text evidence="1">Catalyzes the ferrous insertion into protoporphyrin IX.</text>
</comment>
<comment type="catalytic activity">
    <reaction evidence="1">
        <text>heme b + 2 H(+) = protoporphyrin IX + Fe(2+)</text>
        <dbReference type="Rhea" id="RHEA:22584"/>
        <dbReference type="ChEBI" id="CHEBI:15378"/>
        <dbReference type="ChEBI" id="CHEBI:29033"/>
        <dbReference type="ChEBI" id="CHEBI:57306"/>
        <dbReference type="ChEBI" id="CHEBI:60344"/>
        <dbReference type="EC" id="4.98.1.1"/>
    </reaction>
</comment>
<comment type="pathway">
    <text evidence="1">Porphyrin-containing compound metabolism; protoheme biosynthesis; protoheme from protoporphyrin-IX: step 1/1.</text>
</comment>
<comment type="subunit">
    <text evidence="1">Monomer.</text>
</comment>
<comment type="subcellular location">
    <subcellularLocation>
        <location evidence="1">Cytoplasm</location>
    </subcellularLocation>
</comment>
<comment type="similarity">
    <text evidence="1">Belongs to the ferrochelatase family.</text>
</comment>
<proteinExistence type="inferred from homology"/>
<name>HEMH_ECO7I</name>
<reference key="1">
    <citation type="journal article" date="2009" name="PLoS Genet.">
        <title>Organised genome dynamics in the Escherichia coli species results in highly diverse adaptive paths.</title>
        <authorList>
            <person name="Touchon M."/>
            <person name="Hoede C."/>
            <person name="Tenaillon O."/>
            <person name="Barbe V."/>
            <person name="Baeriswyl S."/>
            <person name="Bidet P."/>
            <person name="Bingen E."/>
            <person name="Bonacorsi S."/>
            <person name="Bouchier C."/>
            <person name="Bouvet O."/>
            <person name="Calteau A."/>
            <person name="Chiapello H."/>
            <person name="Clermont O."/>
            <person name="Cruveiller S."/>
            <person name="Danchin A."/>
            <person name="Diard M."/>
            <person name="Dossat C."/>
            <person name="Karoui M.E."/>
            <person name="Frapy E."/>
            <person name="Garry L."/>
            <person name="Ghigo J.M."/>
            <person name="Gilles A.M."/>
            <person name="Johnson J."/>
            <person name="Le Bouguenec C."/>
            <person name="Lescat M."/>
            <person name="Mangenot S."/>
            <person name="Martinez-Jehanne V."/>
            <person name="Matic I."/>
            <person name="Nassif X."/>
            <person name="Oztas S."/>
            <person name="Petit M.A."/>
            <person name="Pichon C."/>
            <person name="Rouy Z."/>
            <person name="Ruf C.S."/>
            <person name="Schneider D."/>
            <person name="Tourret J."/>
            <person name="Vacherie B."/>
            <person name="Vallenet D."/>
            <person name="Medigue C."/>
            <person name="Rocha E.P.C."/>
            <person name="Denamur E."/>
        </authorList>
    </citation>
    <scope>NUCLEOTIDE SEQUENCE [LARGE SCALE GENOMIC DNA]</scope>
    <source>
        <strain>IAI39 / ExPEC</strain>
    </source>
</reference>